<accession>A7HHN3</accession>
<gene>
    <name evidence="1" type="primary">ureG</name>
    <name type="ordered locus">Anae109_4051</name>
</gene>
<feature type="chain" id="PRO_0000347345" description="Urease accessory protein UreG">
    <location>
        <begin position="1"/>
        <end position="236"/>
    </location>
</feature>
<feature type="region of interest" description="Disordered" evidence="2">
    <location>
        <begin position="1"/>
        <end position="26"/>
    </location>
</feature>
<feature type="binding site" evidence="1">
    <location>
        <begin position="42"/>
        <end position="49"/>
    </location>
    <ligand>
        <name>GTP</name>
        <dbReference type="ChEBI" id="CHEBI:37565"/>
    </ligand>
</feature>
<dbReference type="EMBL" id="CP000769">
    <property type="protein sequence ID" value="ABS28229.1"/>
    <property type="molecule type" value="Genomic_DNA"/>
</dbReference>
<dbReference type="RefSeq" id="WP_012098867.1">
    <property type="nucleotide sequence ID" value="NC_009675.1"/>
</dbReference>
<dbReference type="SMR" id="A7HHN3"/>
<dbReference type="STRING" id="404589.Anae109_4051"/>
<dbReference type="KEGG" id="afw:Anae109_4051"/>
<dbReference type="eggNOG" id="COG0378">
    <property type="taxonomic scope" value="Bacteria"/>
</dbReference>
<dbReference type="HOGENOM" id="CLU_072144_0_0_7"/>
<dbReference type="OrthoDB" id="9802035at2"/>
<dbReference type="Proteomes" id="UP000006382">
    <property type="component" value="Chromosome"/>
</dbReference>
<dbReference type="GO" id="GO:0005737">
    <property type="term" value="C:cytoplasm"/>
    <property type="evidence" value="ECO:0007669"/>
    <property type="project" value="UniProtKB-SubCell"/>
</dbReference>
<dbReference type="GO" id="GO:0005525">
    <property type="term" value="F:GTP binding"/>
    <property type="evidence" value="ECO:0007669"/>
    <property type="project" value="UniProtKB-KW"/>
</dbReference>
<dbReference type="GO" id="GO:0003924">
    <property type="term" value="F:GTPase activity"/>
    <property type="evidence" value="ECO:0007669"/>
    <property type="project" value="InterPro"/>
</dbReference>
<dbReference type="GO" id="GO:0016151">
    <property type="term" value="F:nickel cation binding"/>
    <property type="evidence" value="ECO:0007669"/>
    <property type="project" value="InterPro"/>
</dbReference>
<dbReference type="GO" id="GO:0043419">
    <property type="term" value="P:urea catabolic process"/>
    <property type="evidence" value="ECO:0007669"/>
    <property type="project" value="InterPro"/>
</dbReference>
<dbReference type="CDD" id="cd05540">
    <property type="entry name" value="UreG"/>
    <property type="match status" value="1"/>
</dbReference>
<dbReference type="FunFam" id="3.40.50.300:FF:000208">
    <property type="entry name" value="Urease accessory protein UreG"/>
    <property type="match status" value="1"/>
</dbReference>
<dbReference type="Gene3D" id="3.40.50.300">
    <property type="entry name" value="P-loop containing nucleotide triphosphate hydrolases"/>
    <property type="match status" value="1"/>
</dbReference>
<dbReference type="HAMAP" id="MF_01389">
    <property type="entry name" value="UreG"/>
    <property type="match status" value="1"/>
</dbReference>
<dbReference type="InterPro" id="IPR003495">
    <property type="entry name" value="CobW/HypB/UreG_nucleotide-bd"/>
</dbReference>
<dbReference type="InterPro" id="IPR027417">
    <property type="entry name" value="P-loop_NTPase"/>
</dbReference>
<dbReference type="InterPro" id="IPR004400">
    <property type="entry name" value="UreG"/>
</dbReference>
<dbReference type="NCBIfam" id="TIGR00101">
    <property type="entry name" value="ureG"/>
    <property type="match status" value="1"/>
</dbReference>
<dbReference type="PANTHER" id="PTHR31715">
    <property type="entry name" value="UREASE ACCESSORY PROTEIN G"/>
    <property type="match status" value="1"/>
</dbReference>
<dbReference type="PANTHER" id="PTHR31715:SF0">
    <property type="entry name" value="UREASE ACCESSORY PROTEIN G"/>
    <property type="match status" value="1"/>
</dbReference>
<dbReference type="Pfam" id="PF02492">
    <property type="entry name" value="cobW"/>
    <property type="match status" value="1"/>
</dbReference>
<dbReference type="PIRSF" id="PIRSF005624">
    <property type="entry name" value="Ni-bind_GTPase"/>
    <property type="match status" value="1"/>
</dbReference>
<dbReference type="SUPFAM" id="SSF52540">
    <property type="entry name" value="P-loop containing nucleoside triphosphate hydrolases"/>
    <property type="match status" value="1"/>
</dbReference>
<proteinExistence type="inferred from homology"/>
<comment type="function">
    <text evidence="1">Facilitates the functional incorporation of the urease nickel metallocenter. This process requires GTP hydrolysis, probably effectuated by UreG.</text>
</comment>
<comment type="subunit">
    <text evidence="1">Homodimer. UreD, UreF and UreG form a complex that acts as a GTP-hydrolysis-dependent molecular chaperone, activating the urease apoprotein by helping to assemble the nickel containing metallocenter of UreC. The UreE protein probably delivers the nickel.</text>
</comment>
<comment type="subcellular location">
    <subcellularLocation>
        <location evidence="1">Cytoplasm</location>
    </subcellularLocation>
</comment>
<comment type="similarity">
    <text evidence="1">Belongs to the SIMIBI class G3E GTPase family. UreG subfamily.</text>
</comment>
<keyword id="KW-0143">Chaperone</keyword>
<keyword id="KW-0963">Cytoplasm</keyword>
<keyword id="KW-0342">GTP-binding</keyword>
<keyword id="KW-0996">Nickel insertion</keyword>
<keyword id="KW-0547">Nucleotide-binding</keyword>
<keyword id="KW-1185">Reference proteome</keyword>
<reference key="1">
    <citation type="journal article" date="2015" name="Genome Announc.">
        <title>Complete genome sequence of Anaeromyxobacter sp. Fw109-5, an anaerobic, metal-reducing bacterium isolated from a contaminated subsurface environment.</title>
        <authorList>
            <person name="Hwang C."/>
            <person name="Copeland A."/>
            <person name="Lucas S."/>
            <person name="Lapidus A."/>
            <person name="Barry K."/>
            <person name="Glavina Del Rio T."/>
            <person name="Dalin E."/>
            <person name="Tice H."/>
            <person name="Pitluck S."/>
            <person name="Sims D."/>
            <person name="Brettin T."/>
            <person name="Bruce D.C."/>
            <person name="Detter J.C."/>
            <person name="Han C.S."/>
            <person name="Schmutz J."/>
            <person name="Larimer F.W."/>
            <person name="Land M.L."/>
            <person name="Hauser L.J."/>
            <person name="Kyrpides N."/>
            <person name="Lykidis A."/>
            <person name="Richardson P."/>
            <person name="Belieav A."/>
            <person name="Sanford R.A."/>
            <person name="Loeffler F.E."/>
            <person name="Fields M.W."/>
        </authorList>
    </citation>
    <scope>NUCLEOTIDE SEQUENCE [LARGE SCALE GENOMIC DNA]</scope>
    <source>
        <strain>Fw109-5</strain>
    </source>
</reference>
<protein>
    <recommendedName>
        <fullName evidence="1">Urease accessory protein UreG</fullName>
    </recommendedName>
</protein>
<sequence>MHDHSLHSGHDHGLGPGSFHDRGAPHARGDLRRRAFTVGVGGPVGSGKTALVLALCRALRDSRSLGVVTNDIFTREDAEFLVRNDALPAERIRAVETGGCPHAAIREDVTANLLALEELTEAHRPEILFCESGGDNLAAHFSRELADYTIYVIDVAGGDKVPRKGGPGITQADLLVVNKTDLATAVGADLDVMARDAARMRGDGPVVFAQVTRGVGVPEIAGHVLHAYRHAVGAPH</sequence>
<evidence type="ECO:0000255" key="1">
    <source>
        <dbReference type="HAMAP-Rule" id="MF_01389"/>
    </source>
</evidence>
<evidence type="ECO:0000256" key="2">
    <source>
        <dbReference type="SAM" id="MobiDB-lite"/>
    </source>
</evidence>
<name>UREG_ANADF</name>
<organism>
    <name type="scientific">Anaeromyxobacter sp. (strain Fw109-5)</name>
    <dbReference type="NCBI Taxonomy" id="404589"/>
    <lineage>
        <taxon>Bacteria</taxon>
        <taxon>Pseudomonadati</taxon>
        <taxon>Myxococcota</taxon>
        <taxon>Myxococcia</taxon>
        <taxon>Myxococcales</taxon>
        <taxon>Cystobacterineae</taxon>
        <taxon>Anaeromyxobacteraceae</taxon>
        <taxon>Anaeromyxobacter</taxon>
    </lineage>
</organism>